<keyword id="KW-1035">Host cytoplasm</keyword>
<keyword id="KW-1048">Host nucleus</keyword>
<keyword id="KW-1185">Reference proteome</keyword>
<keyword id="KW-0732">Signal</keyword>
<gene>
    <name type="primary">ORF31</name>
</gene>
<organismHost>
    <name type="scientific">Homo sapiens</name>
    <name type="common">Human</name>
    <dbReference type="NCBI Taxonomy" id="9606"/>
</organismHost>
<sequence length="194" mass="21729">MKSVASPLCQFHGVFCLYQCRQCLAYHVCDGGAECVLLHTPESVICELTGNCMLGNIQEGQFLGPVPYRTLDNQVDRDAYHGMLACLKRDIVRYLQTWPDTTVIVQEIALGDGVTDTISAIIDETFGECLPVLGEAQGGYALVCSMYLHVIVSIYSTKTVYNSMLFKCTKNKKYDCIAKRVRTKWMRMLSTKDT</sequence>
<accession>Q2HRA1</accession>
<dbReference type="EMBL" id="AF148805">
    <property type="protein sequence ID" value="ABD28881.1"/>
    <property type="molecule type" value="Genomic_DNA"/>
</dbReference>
<dbReference type="RefSeq" id="YP_001129384.1">
    <property type="nucleotide sequence ID" value="NC_009333.1"/>
</dbReference>
<dbReference type="BioGRID" id="1777001">
    <property type="interactions" value="1"/>
</dbReference>
<dbReference type="GeneID" id="4961498"/>
<dbReference type="KEGG" id="vg:4961498"/>
<dbReference type="Proteomes" id="UP000000942">
    <property type="component" value="Segment"/>
</dbReference>
<dbReference type="GO" id="GO:0030430">
    <property type="term" value="C:host cell cytoplasm"/>
    <property type="evidence" value="ECO:0007669"/>
    <property type="project" value="UniProtKB-SubCell"/>
</dbReference>
<dbReference type="GO" id="GO:0042025">
    <property type="term" value="C:host cell nucleus"/>
    <property type="evidence" value="ECO:0007669"/>
    <property type="project" value="UniProtKB-SubCell"/>
</dbReference>
<dbReference type="InterPro" id="IPR004289">
    <property type="entry name" value="Herpes_UL92"/>
</dbReference>
<dbReference type="Pfam" id="PF03048">
    <property type="entry name" value="Herpes_UL92"/>
    <property type="match status" value="1"/>
</dbReference>
<name>UL92_HHV8P</name>
<comment type="function">
    <text evidence="2 3 4">Plays an important role in the expression of late genes (PubMed:25810551, PubMed:28336944). May play a role in viral replication (PubMed:15163752).</text>
</comment>
<comment type="subunit">
    <text evidence="3 4">Interacts with ORF34.</text>
</comment>
<comment type="subcellular location">
    <subcellularLocation>
        <location evidence="4">Host nucleus</location>
    </subcellularLocation>
    <subcellularLocation>
        <location evidence="4">Host cytoplasm</location>
    </subcellularLocation>
    <text evidence="4">Mainly localizes in host nucleus and partially in host cytosol.</text>
</comment>
<comment type="similarity">
    <text evidence="5">Belongs to the herpesviridae UL92 family.</text>
</comment>
<reference key="1">
    <citation type="journal article" date="1999" name="J. Virol.">
        <title>Identification of a spliced gene from Kaposi's sarcoma-associated herpesvirus encoding a protein with similarities to latent membrane proteins 1 and 2A of Epstein-Barr virus.</title>
        <authorList>
            <person name="Glenn M."/>
            <person name="Rainbow L."/>
            <person name="Aurade F."/>
            <person name="Davison A."/>
            <person name="Schulz T.F."/>
        </authorList>
    </citation>
    <scope>NUCLEOTIDE SEQUENCE [LARGE SCALE GENOMIC DNA]</scope>
</reference>
<reference key="2">
    <citation type="journal article" date="2006" name="J. Gen. Virol.">
        <title>Kaposi's sarcoma-associated herpesvirus immune modulation: an overview.</title>
        <authorList>
            <person name="Rezaee S.A.R."/>
            <person name="Cunningham C."/>
            <person name="Davison A.J."/>
            <person name="Blackbourn D.J."/>
        </authorList>
    </citation>
    <scope>NUCLEOTIDE SEQUENCE [LARGE SCALE GENOMIC DNA]</scope>
</reference>
<reference key="3">
    <citation type="journal article" date="2004" name="J. Virol.">
        <title>Murine gammaherpesvirus 68 open reading frame 31 is required for viral replication.</title>
        <authorList>
            <person name="Jia Q."/>
            <person name="Wu T.T."/>
            <person name="Liao H.I."/>
            <person name="Chernishof V."/>
            <person name="Sun R."/>
        </authorList>
    </citation>
    <scope>FUNCTION</scope>
</reference>
<reference key="4">
    <citation type="journal article" date="2015" name="J. Virol.">
        <title>Association of Kaposi's Sarcoma-Associated Herpesvirus ORF31 with ORF34 and ORF24 Is Critical for Late Gene Expression.</title>
        <authorList>
            <person name="Brulois K."/>
            <person name="Wong L.Y."/>
            <person name="Lee H.R."/>
            <person name="Sivadas P."/>
            <person name="Ensser A."/>
            <person name="Feng P."/>
            <person name="Gao S.J."/>
            <person name="Toth Z."/>
            <person name="Jung J.U."/>
        </authorList>
    </citation>
    <scope>FUNCTION</scope>
    <scope>INTERACTION WITH ORF34</scope>
</reference>
<reference key="5">
    <citation type="journal article" date="2017" name="Sci. Rep.">
        <title>Kaposi's sarcoma-associated herpesvirus ORF34 is essential for late gene expression and virus production.</title>
        <authorList>
            <person name="Nishimura M."/>
            <person name="Watanabe T."/>
            <person name="Yagi S."/>
            <person name="Yamanaka T."/>
            <person name="Fujimuro M."/>
        </authorList>
    </citation>
    <scope>FUNCTION</scope>
    <scope>INTERACTION WITH ORF34</scope>
    <scope>SUBCELLULAR LOCATION</scope>
</reference>
<organism>
    <name type="scientific">Human herpesvirus 8 type P (isolate GK18)</name>
    <name type="common">HHV-8</name>
    <name type="synonym">Kaposi's sarcoma-associated herpesvirus</name>
    <dbReference type="NCBI Taxonomy" id="868565"/>
    <lineage>
        <taxon>Viruses</taxon>
        <taxon>Duplodnaviria</taxon>
        <taxon>Heunggongvirae</taxon>
        <taxon>Peploviricota</taxon>
        <taxon>Herviviricetes</taxon>
        <taxon>Herpesvirales</taxon>
        <taxon>Orthoherpesviridae</taxon>
        <taxon>Gammaherpesvirinae</taxon>
        <taxon>Rhadinovirus</taxon>
        <taxon>Rhadinovirus humangamma8</taxon>
        <taxon>Human herpesvirus 8</taxon>
    </lineage>
</organism>
<feature type="signal peptide" evidence="1">
    <location>
        <begin position="1"/>
        <end position="25"/>
    </location>
</feature>
<feature type="chain" id="PRO_0000423789" description="Protein ORF31">
    <location>
        <begin position="26"/>
        <end position="194"/>
    </location>
</feature>
<protein>
    <recommendedName>
        <fullName>Protein ORF31</fullName>
    </recommendedName>
</protein>
<proteinExistence type="evidence at protein level"/>
<evidence type="ECO:0000255" key="1"/>
<evidence type="ECO:0000269" key="2">
    <source>
    </source>
</evidence>
<evidence type="ECO:0000269" key="3">
    <source>
    </source>
</evidence>
<evidence type="ECO:0000269" key="4">
    <source>
    </source>
</evidence>
<evidence type="ECO:0000305" key="5"/>